<dbReference type="EMBL" id="CR858477">
    <property type="protein sequence ID" value="CAH90705.1"/>
    <property type="molecule type" value="mRNA"/>
</dbReference>
<dbReference type="RefSeq" id="NP_001125390.1">
    <property type="nucleotide sequence ID" value="NM_001131918.1"/>
</dbReference>
<dbReference type="FunCoup" id="Q5RC05">
    <property type="interactions" value="1989"/>
</dbReference>
<dbReference type="STRING" id="9601.ENSPPYP00000002548"/>
<dbReference type="GeneID" id="100172295"/>
<dbReference type="KEGG" id="pon:100172295"/>
<dbReference type="CTD" id="220929"/>
<dbReference type="eggNOG" id="KOG1721">
    <property type="taxonomic scope" value="Eukaryota"/>
</dbReference>
<dbReference type="InParanoid" id="Q5RC05"/>
<dbReference type="OrthoDB" id="3437960at2759"/>
<dbReference type="Proteomes" id="UP000001595">
    <property type="component" value="Unplaced"/>
</dbReference>
<dbReference type="GO" id="GO:0005634">
    <property type="term" value="C:nucleus"/>
    <property type="evidence" value="ECO:0000250"/>
    <property type="project" value="UniProtKB"/>
</dbReference>
<dbReference type="GO" id="GO:0003700">
    <property type="term" value="F:DNA-binding transcription factor activity"/>
    <property type="evidence" value="ECO:0000250"/>
    <property type="project" value="UniProtKB"/>
</dbReference>
<dbReference type="GO" id="GO:0000981">
    <property type="term" value="F:DNA-binding transcription factor activity, RNA polymerase II-specific"/>
    <property type="evidence" value="ECO:0007669"/>
    <property type="project" value="TreeGrafter"/>
</dbReference>
<dbReference type="GO" id="GO:0043565">
    <property type="term" value="F:sequence-specific DNA binding"/>
    <property type="evidence" value="ECO:0007669"/>
    <property type="project" value="TreeGrafter"/>
</dbReference>
<dbReference type="GO" id="GO:0008270">
    <property type="term" value="F:zinc ion binding"/>
    <property type="evidence" value="ECO:0007669"/>
    <property type="project" value="UniProtKB-KW"/>
</dbReference>
<dbReference type="GO" id="GO:0045892">
    <property type="term" value="P:negative regulation of DNA-templated transcription"/>
    <property type="evidence" value="ECO:0000250"/>
    <property type="project" value="UniProtKB"/>
</dbReference>
<dbReference type="FunFam" id="3.30.160.60:FF:000946">
    <property type="entry name" value="Zinc finger protein 438"/>
    <property type="match status" value="1"/>
</dbReference>
<dbReference type="FunFam" id="3.30.160.60:FF:003312">
    <property type="entry name" value="Zinc finger protein 438"/>
    <property type="match status" value="1"/>
</dbReference>
<dbReference type="Gene3D" id="3.30.160.60">
    <property type="entry name" value="Classic Zinc Finger"/>
    <property type="match status" value="2"/>
</dbReference>
<dbReference type="InterPro" id="IPR036236">
    <property type="entry name" value="Znf_C2H2_sf"/>
</dbReference>
<dbReference type="InterPro" id="IPR013087">
    <property type="entry name" value="Znf_C2H2_type"/>
</dbReference>
<dbReference type="PANTHER" id="PTHR24408">
    <property type="entry name" value="ZINC FINGER PROTEIN"/>
    <property type="match status" value="1"/>
</dbReference>
<dbReference type="PANTHER" id="PTHR24408:SF23">
    <property type="entry name" value="ZINC FINGER PROTEIN 438"/>
    <property type="match status" value="1"/>
</dbReference>
<dbReference type="SMART" id="SM00355">
    <property type="entry name" value="ZnF_C2H2"/>
    <property type="match status" value="5"/>
</dbReference>
<dbReference type="SUPFAM" id="SSF57667">
    <property type="entry name" value="beta-beta-alpha zinc fingers"/>
    <property type="match status" value="1"/>
</dbReference>
<dbReference type="PROSITE" id="PS00028">
    <property type="entry name" value="ZINC_FINGER_C2H2_1"/>
    <property type="match status" value="4"/>
</dbReference>
<dbReference type="PROSITE" id="PS50157">
    <property type="entry name" value="ZINC_FINGER_C2H2_2"/>
    <property type="match status" value="3"/>
</dbReference>
<organism>
    <name type="scientific">Pongo abelii</name>
    <name type="common">Sumatran orangutan</name>
    <name type="synonym">Pongo pygmaeus abelii</name>
    <dbReference type="NCBI Taxonomy" id="9601"/>
    <lineage>
        <taxon>Eukaryota</taxon>
        <taxon>Metazoa</taxon>
        <taxon>Chordata</taxon>
        <taxon>Craniata</taxon>
        <taxon>Vertebrata</taxon>
        <taxon>Euteleostomi</taxon>
        <taxon>Mammalia</taxon>
        <taxon>Eutheria</taxon>
        <taxon>Euarchontoglires</taxon>
        <taxon>Primates</taxon>
        <taxon>Haplorrhini</taxon>
        <taxon>Catarrhini</taxon>
        <taxon>Hominidae</taxon>
        <taxon>Pongo</taxon>
    </lineage>
</organism>
<proteinExistence type="evidence at transcript level"/>
<reference key="1">
    <citation type="submission" date="2004-11" db="EMBL/GenBank/DDBJ databases">
        <authorList>
            <consortium name="The German cDNA consortium"/>
        </authorList>
    </citation>
    <scope>NUCLEOTIDE SEQUENCE [LARGE SCALE MRNA]</scope>
    <source>
        <tissue>Heart</tissue>
    </source>
</reference>
<comment type="function">
    <text evidence="1">Acts as a transcriptional repressor.</text>
</comment>
<comment type="subcellular location">
    <subcellularLocation>
        <location evidence="1">Nucleus</location>
    </subcellularLocation>
</comment>
<evidence type="ECO:0000250" key="1"/>
<evidence type="ECO:0000255" key="2">
    <source>
        <dbReference type="PROSITE-ProRule" id="PRU00042"/>
    </source>
</evidence>
<evidence type="ECO:0000256" key="3">
    <source>
        <dbReference type="SAM" id="MobiDB-lite"/>
    </source>
</evidence>
<name>ZN438_PONAB</name>
<protein>
    <recommendedName>
        <fullName>Zinc finger protein 438</fullName>
    </recommendedName>
</protein>
<accession>Q5RC05</accession>
<gene>
    <name type="primary">ZNF438</name>
</gene>
<sequence>MQNSLSVPPRDEGESNIPSGTIQSRKGLQNKSQFRTIAPKIVPKVLTSRMLPCHSPSHSDQVNLGPSINSKPLGMSTQNYALMQVAGQEGTFSLVALPHVASAQPIQKPRMSLPENLKLPIPRYQPPRNSKGSRKKPILIFPKSGCSKAPAQTQMCPQMSPSPPHHPELLYKPSPFEEVPSLEQAPASISTAALTNGSDHGDLRPPVTNTHGSLNPPATPASPTPEEPAKQDLTDLSGKAHFVSKITSSKPSAVVSEKFKEQVYLAKTMTSLSPAILGNAVQLISSVPKGKLPIPPYSRMKTTEVYKIKSDANIAGFSLPGPKADCDKISSTTEGFNAATKVASKLPVPQVSQQSACESAFCPPTKLDLNHKTKLNSGAAKRKGRKWKVPDEILAFQGKRRKCIINKCRDGKERVKNDPQEFRDQKLGTLKKYRSIMPKPIMVIPTLASLASPTIQSQMLGGLGQDVLLNNSLTPKYLGCKQDNSSSPKPSSVFRNGFSGIKKPWHRCHVCNHHFQFKQHLQDHMNTHTNRRPYSCRICRKSYVRPGSLSTHMKLHHGENRLKKLMCCEFCAKVFGHIRVYFGHLKEVHRVVISTEPAPSELQPGDIPKNRDVSVQGMEGSLERENKSNLEEDFLLNQAGEVKLQIKCGRCQITAQSFAEIKFHLLYVHGEEIQGRLQEGTFPGSKGTQEELVQHASHDWKRHPERGKPEKVHSSSEESHACPRLKRQLHLHQNGVEMPIENEGPQSGTNKPRETCQGPECPGLHTVLLWSRSGFNCLLCAEMLGQKEDLLHHWKHQHNCEDPSKLWAILNTVSNQGVIELSSEAEK</sequence>
<feature type="chain" id="PRO_0000245848" description="Zinc finger protein 438">
    <location>
        <begin position="1"/>
        <end position="827"/>
    </location>
</feature>
<feature type="zinc finger region" description="C2H2-type 1" evidence="2">
    <location>
        <begin position="506"/>
        <end position="528"/>
    </location>
</feature>
<feature type="zinc finger region" description="C2H2-type 2" evidence="2">
    <location>
        <begin position="534"/>
        <end position="556"/>
    </location>
</feature>
<feature type="zinc finger region" description="C2H2-type 3" evidence="2">
    <location>
        <begin position="566"/>
        <end position="589"/>
    </location>
</feature>
<feature type="zinc finger region" description="C2H2-type 4" evidence="2">
    <location>
        <begin position="775"/>
        <end position="798"/>
    </location>
</feature>
<feature type="region of interest" description="Disordered" evidence="3">
    <location>
        <begin position="1"/>
        <end position="31"/>
    </location>
</feature>
<feature type="region of interest" description="Disordered" evidence="3">
    <location>
        <begin position="117"/>
        <end position="173"/>
    </location>
</feature>
<feature type="region of interest" description="Disordered" evidence="3">
    <location>
        <begin position="193"/>
        <end position="232"/>
    </location>
</feature>
<feature type="region of interest" description="Disordered" evidence="3">
    <location>
        <begin position="682"/>
        <end position="723"/>
    </location>
</feature>
<feature type="compositionally biased region" description="Polar residues" evidence="3">
    <location>
        <begin position="16"/>
        <end position="31"/>
    </location>
</feature>
<feature type="compositionally biased region" description="Polar residues" evidence="3">
    <location>
        <begin position="150"/>
        <end position="159"/>
    </location>
</feature>
<feature type="compositionally biased region" description="Pro residues" evidence="3">
    <location>
        <begin position="217"/>
        <end position="226"/>
    </location>
</feature>
<feature type="compositionally biased region" description="Basic and acidic residues" evidence="3">
    <location>
        <begin position="688"/>
        <end position="699"/>
    </location>
</feature>
<feature type="compositionally biased region" description="Basic and acidic residues" evidence="3">
    <location>
        <begin position="706"/>
        <end position="721"/>
    </location>
</feature>
<keyword id="KW-0238">DNA-binding</keyword>
<keyword id="KW-0479">Metal-binding</keyword>
<keyword id="KW-0539">Nucleus</keyword>
<keyword id="KW-1185">Reference proteome</keyword>
<keyword id="KW-0677">Repeat</keyword>
<keyword id="KW-0678">Repressor</keyword>
<keyword id="KW-0804">Transcription</keyword>
<keyword id="KW-0805">Transcription regulation</keyword>
<keyword id="KW-0862">Zinc</keyword>
<keyword id="KW-0863">Zinc-finger</keyword>